<feature type="chain" id="PRO_1000045433" description="High frequency lysogenization protein HflD homolog">
    <location>
        <begin position="1"/>
        <end position="206"/>
    </location>
</feature>
<organism>
    <name type="scientific">Pseudomonas syringae pv. syringae (strain B728a)</name>
    <dbReference type="NCBI Taxonomy" id="205918"/>
    <lineage>
        <taxon>Bacteria</taxon>
        <taxon>Pseudomonadati</taxon>
        <taxon>Pseudomonadota</taxon>
        <taxon>Gammaproteobacteria</taxon>
        <taxon>Pseudomonadales</taxon>
        <taxon>Pseudomonadaceae</taxon>
        <taxon>Pseudomonas</taxon>
        <taxon>Pseudomonas syringae</taxon>
    </lineage>
</organism>
<comment type="subcellular location">
    <subcellularLocation>
        <location>Cytoplasm</location>
    </subcellularLocation>
    <subcellularLocation>
        <location evidence="1">Cell inner membrane</location>
        <topology evidence="1">Peripheral membrane protein</topology>
        <orientation evidence="1">Cytoplasmic side</orientation>
    </subcellularLocation>
</comment>
<comment type="similarity">
    <text evidence="1">Belongs to the HflD family.</text>
</comment>
<protein>
    <recommendedName>
        <fullName evidence="1">High frequency lysogenization protein HflD homolog</fullName>
    </recommendedName>
</protein>
<accession>Q4ZRJ9</accession>
<dbReference type="EMBL" id="CP000075">
    <property type="protein sequence ID" value="AAY38223.1"/>
    <property type="molecule type" value="Genomic_DNA"/>
</dbReference>
<dbReference type="RefSeq" id="WP_003405097.1">
    <property type="nucleotide sequence ID" value="NC_007005.1"/>
</dbReference>
<dbReference type="RefSeq" id="YP_236261.1">
    <property type="nucleotide sequence ID" value="NC_007005.1"/>
</dbReference>
<dbReference type="SMR" id="Q4ZRJ9"/>
<dbReference type="STRING" id="205918.Psyr_3191"/>
<dbReference type="KEGG" id="psb:Psyr_3191"/>
<dbReference type="PATRIC" id="fig|205918.7.peg.3257"/>
<dbReference type="eggNOG" id="COG2915">
    <property type="taxonomic scope" value="Bacteria"/>
</dbReference>
<dbReference type="HOGENOM" id="CLU_098920_0_0_6"/>
<dbReference type="OrthoDB" id="9788031at2"/>
<dbReference type="Proteomes" id="UP000000426">
    <property type="component" value="Chromosome"/>
</dbReference>
<dbReference type="GO" id="GO:0005737">
    <property type="term" value="C:cytoplasm"/>
    <property type="evidence" value="ECO:0007669"/>
    <property type="project" value="UniProtKB-SubCell"/>
</dbReference>
<dbReference type="GO" id="GO:0005886">
    <property type="term" value="C:plasma membrane"/>
    <property type="evidence" value="ECO:0007669"/>
    <property type="project" value="UniProtKB-SubCell"/>
</dbReference>
<dbReference type="Gene3D" id="1.10.3890.10">
    <property type="entry name" value="HflD-like"/>
    <property type="match status" value="1"/>
</dbReference>
<dbReference type="HAMAP" id="MF_00695">
    <property type="entry name" value="HflD_protein"/>
    <property type="match status" value="1"/>
</dbReference>
<dbReference type="InterPro" id="IPR007451">
    <property type="entry name" value="HflD"/>
</dbReference>
<dbReference type="InterPro" id="IPR035932">
    <property type="entry name" value="HflD-like_sf"/>
</dbReference>
<dbReference type="NCBIfam" id="NF001246">
    <property type="entry name" value="PRK00218.1-2"/>
    <property type="match status" value="1"/>
</dbReference>
<dbReference type="NCBIfam" id="NF001247">
    <property type="entry name" value="PRK00218.1-3"/>
    <property type="match status" value="1"/>
</dbReference>
<dbReference type="PANTHER" id="PTHR38100">
    <property type="entry name" value="HIGH FREQUENCY LYSOGENIZATION PROTEIN HFLD"/>
    <property type="match status" value="1"/>
</dbReference>
<dbReference type="PANTHER" id="PTHR38100:SF1">
    <property type="entry name" value="HIGH FREQUENCY LYSOGENIZATION PROTEIN HFLD"/>
    <property type="match status" value="1"/>
</dbReference>
<dbReference type="Pfam" id="PF04356">
    <property type="entry name" value="DUF489"/>
    <property type="match status" value="1"/>
</dbReference>
<dbReference type="SUPFAM" id="SSF101322">
    <property type="entry name" value="YcfC-like"/>
    <property type="match status" value="1"/>
</dbReference>
<evidence type="ECO:0000255" key="1">
    <source>
        <dbReference type="HAMAP-Rule" id="MF_00695"/>
    </source>
</evidence>
<gene>
    <name evidence="1" type="primary">hflD</name>
    <name type="ordered locus">Psyr_3191</name>
</gene>
<sequence length="206" mass="22913">MSPTQEQLIALGGVFQAAVLVDRIAKTGQISEAALSCMLGSLLVVDPKDTLDVYGGDDLNLHEGYRAMASALERDPATLQREPLRYALSMLGLERQLAKRDDLLEVIGKRIPVIQSQVEHFGIAHENVIAATGALYQDTLSTLRQRIQVQGDMRNLQQPNNASKIRGILLAGIRSARLWRQVGGHRWQLVFSRRKLLKELYPLLHG</sequence>
<name>HFLD_PSEU2</name>
<keyword id="KW-0997">Cell inner membrane</keyword>
<keyword id="KW-1003">Cell membrane</keyword>
<keyword id="KW-0963">Cytoplasm</keyword>
<keyword id="KW-0472">Membrane</keyword>
<reference key="1">
    <citation type="journal article" date="2005" name="Proc. Natl. Acad. Sci. U.S.A.">
        <title>Comparison of the complete genome sequences of Pseudomonas syringae pv. syringae B728a and pv. tomato DC3000.</title>
        <authorList>
            <person name="Feil H."/>
            <person name="Feil W.S."/>
            <person name="Chain P."/>
            <person name="Larimer F."/>
            <person name="Dibartolo G."/>
            <person name="Copeland A."/>
            <person name="Lykidis A."/>
            <person name="Trong S."/>
            <person name="Nolan M."/>
            <person name="Goltsman E."/>
            <person name="Thiel J."/>
            <person name="Malfatti S."/>
            <person name="Loper J.E."/>
            <person name="Lapidus A."/>
            <person name="Detter J.C."/>
            <person name="Land M."/>
            <person name="Richardson P.M."/>
            <person name="Kyrpides N.C."/>
            <person name="Ivanova N."/>
            <person name="Lindow S.E."/>
        </authorList>
    </citation>
    <scope>NUCLEOTIDE SEQUENCE [LARGE SCALE GENOMIC DNA]</scope>
    <source>
        <strain>B728a</strain>
    </source>
</reference>
<proteinExistence type="inferred from homology"/>